<accession>A1CYJ1</accession>
<name>NOP16_NEOFI</name>
<protein>
    <recommendedName>
        <fullName>Nucleolar protein 16</fullName>
    </recommendedName>
</protein>
<evidence type="ECO:0000250" key="1"/>
<evidence type="ECO:0000256" key="2">
    <source>
        <dbReference type="SAM" id="MobiDB-lite"/>
    </source>
</evidence>
<evidence type="ECO:0000305" key="3"/>
<feature type="chain" id="PRO_0000320380" description="Nucleolar protein 16">
    <location>
        <begin position="1"/>
        <end position="241"/>
    </location>
</feature>
<feature type="region of interest" description="Disordered" evidence="2">
    <location>
        <begin position="1"/>
        <end position="30"/>
    </location>
</feature>
<feature type="region of interest" description="Disordered" evidence="2">
    <location>
        <begin position="64"/>
        <end position="195"/>
    </location>
</feature>
<feature type="region of interest" description="Disordered" evidence="2">
    <location>
        <begin position="209"/>
        <end position="241"/>
    </location>
</feature>
<feature type="compositionally biased region" description="Basic and acidic residues" evidence="2">
    <location>
        <begin position="70"/>
        <end position="89"/>
    </location>
</feature>
<feature type="compositionally biased region" description="Basic and acidic residues" evidence="2">
    <location>
        <begin position="106"/>
        <end position="122"/>
    </location>
</feature>
<feature type="compositionally biased region" description="Polar residues" evidence="2">
    <location>
        <begin position="155"/>
        <end position="172"/>
    </location>
</feature>
<feature type="compositionally biased region" description="Basic and acidic residues" evidence="2">
    <location>
        <begin position="209"/>
        <end position="218"/>
    </location>
</feature>
<feature type="compositionally biased region" description="Basic residues" evidence="2">
    <location>
        <begin position="230"/>
        <end position="241"/>
    </location>
</feature>
<reference key="1">
    <citation type="journal article" date="2008" name="PLoS Genet.">
        <title>Genomic islands in the pathogenic filamentous fungus Aspergillus fumigatus.</title>
        <authorList>
            <person name="Fedorova N.D."/>
            <person name="Khaldi N."/>
            <person name="Joardar V.S."/>
            <person name="Maiti R."/>
            <person name="Amedeo P."/>
            <person name="Anderson M.J."/>
            <person name="Crabtree J."/>
            <person name="Silva J.C."/>
            <person name="Badger J.H."/>
            <person name="Albarraq A."/>
            <person name="Angiuoli S."/>
            <person name="Bussey H."/>
            <person name="Bowyer P."/>
            <person name="Cotty P.J."/>
            <person name="Dyer P.S."/>
            <person name="Egan A."/>
            <person name="Galens K."/>
            <person name="Fraser-Liggett C.M."/>
            <person name="Haas B.J."/>
            <person name="Inman J.M."/>
            <person name="Kent R."/>
            <person name="Lemieux S."/>
            <person name="Malavazi I."/>
            <person name="Orvis J."/>
            <person name="Roemer T."/>
            <person name="Ronning C.M."/>
            <person name="Sundaram J.P."/>
            <person name="Sutton G."/>
            <person name="Turner G."/>
            <person name="Venter J.C."/>
            <person name="White O.R."/>
            <person name="Whitty B.R."/>
            <person name="Youngman P."/>
            <person name="Wolfe K.H."/>
            <person name="Goldman G.H."/>
            <person name="Wortman J.R."/>
            <person name="Jiang B."/>
            <person name="Denning D.W."/>
            <person name="Nierman W.C."/>
        </authorList>
    </citation>
    <scope>NUCLEOTIDE SEQUENCE [LARGE SCALE GENOMIC DNA]</scope>
    <source>
        <strain>ATCC 1020 / DSM 3700 / CBS 544.65 / FGSC A1164 / JCM 1740 / NRRL 181 / WB 181</strain>
    </source>
</reference>
<comment type="function">
    <text evidence="1">Involved in the biogenesis of the 60S ribosomal subunit.</text>
</comment>
<comment type="subunit">
    <text evidence="1">Component of the pre-66S ribosomal particle.</text>
</comment>
<comment type="subcellular location">
    <subcellularLocation>
        <location evidence="1">Nucleus</location>
        <location evidence="1">Nucleolus</location>
    </subcellularLocation>
</comment>
<comment type="similarity">
    <text evidence="3">Belongs to the NOP16 family.</text>
</comment>
<organism>
    <name type="scientific">Neosartorya fischeri (strain ATCC 1020 / DSM 3700 / CBS 544.65 / FGSC A1164 / JCM 1740 / NRRL 181 / WB 181)</name>
    <name type="common">Aspergillus fischerianus</name>
    <dbReference type="NCBI Taxonomy" id="331117"/>
    <lineage>
        <taxon>Eukaryota</taxon>
        <taxon>Fungi</taxon>
        <taxon>Dikarya</taxon>
        <taxon>Ascomycota</taxon>
        <taxon>Pezizomycotina</taxon>
        <taxon>Eurotiomycetes</taxon>
        <taxon>Eurotiomycetidae</taxon>
        <taxon>Eurotiales</taxon>
        <taxon>Aspergillaceae</taxon>
        <taxon>Aspergillus</taxon>
        <taxon>Aspergillus subgen. Fumigati</taxon>
    </lineage>
</organism>
<proteinExistence type="inferred from homology"/>
<sequence>MGRVLQKKKNRSSTPKQKPKRTGQLKSGKKKINVLGNAIIAQNWDRKLTLTQNYRRLGLVHKLNAPTGGSEKRPTKDGRIEELPEDPLHIRGSAKASAKQAAMGETRVERDPETGKIIRVIRDEEEIEIGGRKVKPSNPLNDPLNELSEDEAAQQPASQRANAKSAIVQQLERQADQEGQAVKAKKPRHQSKREEEWIMRLIERHGENYSAMARDRKLNPMQQSEGDLKRRIRKWKANHSS</sequence>
<keyword id="KW-0539">Nucleus</keyword>
<keyword id="KW-1185">Reference proteome</keyword>
<keyword id="KW-0687">Ribonucleoprotein</keyword>
<keyword id="KW-0690">Ribosome biogenesis</keyword>
<keyword id="KW-0698">rRNA processing</keyword>
<gene>
    <name type="primary">nop16</name>
    <name type="ORF">NFIA_033770</name>
</gene>
<dbReference type="EMBL" id="DS027686">
    <property type="protein sequence ID" value="EAW23811.1"/>
    <property type="molecule type" value="Genomic_DNA"/>
</dbReference>
<dbReference type="RefSeq" id="XP_001265708.1">
    <property type="nucleotide sequence ID" value="XM_001265707.1"/>
</dbReference>
<dbReference type="SMR" id="A1CYJ1"/>
<dbReference type="STRING" id="331117.A1CYJ1"/>
<dbReference type="EnsemblFungi" id="EAW23811">
    <property type="protein sequence ID" value="EAW23811"/>
    <property type="gene ID" value="NFIA_033770"/>
</dbReference>
<dbReference type="GeneID" id="4592772"/>
<dbReference type="KEGG" id="nfi:NFIA_033770"/>
<dbReference type="VEuPathDB" id="FungiDB:NFIA_033770"/>
<dbReference type="eggNOG" id="KOG4771">
    <property type="taxonomic scope" value="Eukaryota"/>
</dbReference>
<dbReference type="HOGENOM" id="CLU_078857_0_0_1"/>
<dbReference type="OMA" id="MQQTEAD"/>
<dbReference type="OrthoDB" id="285729at2759"/>
<dbReference type="Proteomes" id="UP000006702">
    <property type="component" value="Unassembled WGS sequence"/>
</dbReference>
<dbReference type="GO" id="GO:0005730">
    <property type="term" value="C:nucleolus"/>
    <property type="evidence" value="ECO:0007669"/>
    <property type="project" value="UniProtKB-SubCell"/>
</dbReference>
<dbReference type="GO" id="GO:0030687">
    <property type="term" value="C:preribosome, large subunit precursor"/>
    <property type="evidence" value="ECO:0007669"/>
    <property type="project" value="EnsemblFungi"/>
</dbReference>
<dbReference type="GO" id="GO:0042273">
    <property type="term" value="P:ribosomal large subunit biogenesis"/>
    <property type="evidence" value="ECO:0007669"/>
    <property type="project" value="EnsemblFungi"/>
</dbReference>
<dbReference type="GO" id="GO:0006364">
    <property type="term" value="P:rRNA processing"/>
    <property type="evidence" value="ECO:0007669"/>
    <property type="project" value="UniProtKB-KW"/>
</dbReference>
<dbReference type="InterPro" id="IPR019002">
    <property type="entry name" value="Ribosome_biogenesis_Nop16"/>
</dbReference>
<dbReference type="PANTHER" id="PTHR13243">
    <property type="entry name" value="HSPC111 PROTEIN-RELATED"/>
    <property type="match status" value="1"/>
</dbReference>
<dbReference type="PANTHER" id="PTHR13243:SF1">
    <property type="entry name" value="NUCLEOLAR PROTEIN 16"/>
    <property type="match status" value="1"/>
</dbReference>
<dbReference type="Pfam" id="PF09420">
    <property type="entry name" value="Nop16"/>
    <property type="match status" value="1"/>
</dbReference>